<comment type="function">
    <text evidence="1">Capsid protein (CA) is the structural component of the virus-like particle (VLP), forming the shell that encapsulates the retrotransposons dimeric RNA genome. The particles are assembled from trimer-clustered units and there are holes in the capsid shells that allow for the diffusion of macromolecules. CA also has nucleocapsid-like chaperone activity, promoting primer tRNA(i)-Met annealing to the multipartite primer-binding site (PBS), dimerization of Ty1 RNA and initiation of reverse transcription (By similarity).</text>
</comment>
<comment type="function">
    <text evidence="1">The aspartyl protease (PR) mediates the proteolytic cleavages of the Gag and Gag-Pol polyproteins after assembly of the VLP.</text>
</comment>
<comment type="function">
    <text evidence="1">Reverse transcriptase/ribonuclease H (RT) is a multifunctional enzyme that catalyzes the conversion of the retro-elements RNA genome into dsDNA within the VLP. The enzyme displays a DNA polymerase activity that can copy either DNA or RNA templates, and a ribonuclease H (RNase H) activity that cleaves the RNA strand of RNA-DNA heteroduplexes during plus-strand synthesis and hydrolyzes RNA primers. The conversion leads to a linear dsDNA copy of the retrotransposon that includes long terminal repeats (LTRs) at both ends (By similarity).</text>
</comment>
<comment type="function">
    <text evidence="1">Integrase (IN) targets the VLP to the nucleus, where a subparticle preintegration complex (PIC) containing at least integrase and the newly synthesized dsDNA copy of the retrotransposon must transit the nuclear membrane. Once in the nucleus, integrase performs the integration of the dsDNA into the host genome (By similarity).</text>
</comment>
<comment type="catalytic activity">
    <reaction>
        <text>DNA(n) + a 2'-deoxyribonucleoside 5'-triphosphate = DNA(n+1) + diphosphate</text>
        <dbReference type="Rhea" id="RHEA:22508"/>
        <dbReference type="Rhea" id="RHEA-COMP:17339"/>
        <dbReference type="Rhea" id="RHEA-COMP:17340"/>
        <dbReference type="ChEBI" id="CHEBI:33019"/>
        <dbReference type="ChEBI" id="CHEBI:61560"/>
        <dbReference type="ChEBI" id="CHEBI:173112"/>
        <dbReference type="EC" id="2.7.7.49"/>
    </reaction>
</comment>
<comment type="catalytic activity">
    <reaction>
        <text>DNA(n) + a 2'-deoxyribonucleoside 5'-triphosphate = DNA(n+1) + diphosphate</text>
        <dbReference type="Rhea" id="RHEA:22508"/>
        <dbReference type="Rhea" id="RHEA-COMP:17339"/>
        <dbReference type="Rhea" id="RHEA-COMP:17340"/>
        <dbReference type="ChEBI" id="CHEBI:33019"/>
        <dbReference type="ChEBI" id="CHEBI:61560"/>
        <dbReference type="ChEBI" id="CHEBI:173112"/>
        <dbReference type="EC" id="2.7.7.7"/>
    </reaction>
</comment>
<comment type="catalytic activity">
    <reaction>
        <text>Endonucleolytic cleavage to 5'-phosphomonoester.</text>
        <dbReference type="EC" id="3.1.26.4"/>
    </reaction>
</comment>
<comment type="subunit">
    <text evidence="1">The capsid protein forms a homotrimer, from which the VLPs are assembled. The protease is a homodimer, whose active site consists of two apposed aspartic acid residues (By similarity).</text>
</comment>
<comment type="subcellular location">
    <subcellularLocation>
        <location>Cytoplasm</location>
    </subcellularLocation>
    <subcellularLocation>
        <location evidence="1">Nucleus</location>
    </subcellularLocation>
</comment>
<comment type="alternative products">
    <event type="ribosomal frameshifting"/>
    <isoform>
        <id>P0C2I9-1</id>
        <name>Transposon Ty1-PR1 Gag-Pol polyprotein</name>
        <sequence type="displayed"/>
    </isoform>
    <isoform>
        <id>P0CX58-1</id>
        <name>Transposon Ty1-PR1 Gag polyprotein</name>
        <sequence type="external"/>
    </isoform>
    <text evidence="1">The Gag-Pol polyprotein is generated by a +1 ribosomal frameshift. The ratio of Gag:Gag-Pol varies between 20:1 and 5:1 (By similarity).</text>
</comment>
<comment type="domain">
    <text evidence="1">The C-terminal RNA-binding region of CA is sufficient for all its nucleocapsid-like chaperone activities.</text>
</comment>
<comment type="domain">
    <text evidence="1">Integrase core domain contains the D-x(n)-D-x(35)-E motif, named for the phylogenetically conserved glutamic acid and aspartic acid residues and the invariant 35 amino acid spacing between the second and third acidic residues. Each acidic residue of the D,D(35)E motif is independently essential for the 3'-processing and strand transfer activities of purified integrase protein (By similarity).</text>
</comment>
<comment type="PTM">
    <text evidence="1">Initially, virus-like particles (VLPs) are composed of the structural unprocessed proteins Gag and Gag-Pol, and also contain the host initiator methionine tRNA (tRNA(i)-Met) which serves as a primer for minus-strand DNA synthesis, and a dimer of genomic Ty RNA. Processing of the polyproteins occurs within the particle and proceeds by an ordered pathway, called maturation. First, the protease (PR) is released by autocatalytic cleavage of the Gag-Pol polyprotein yielding capsid protein p45 and a Pol-p154 precursor protein. This cleavage is a prerequisite for subsequent processing of Pol-p154 at the remaining sites to release the mature structural and catalytic proteins. Maturation takes place prior to the RT reaction and is required to produce transposition-competent VLPs (By similarity).</text>
</comment>
<comment type="miscellaneous">
    <text>Retrotransposons are mobile genetic entities that are able to replicate via an RNA intermediate and a reverse transcription step. In contrast to retroviruses, retrotransposons are non-infectious, lack an envelope and remain intracellular. Ty1 retrotransposons belong to the copia elements (pseudoviridae).</text>
</comment>
<comment type="miscellaneous">
    <molecule>Isoform Transposon Ty1-PR1 Gag-Pol polyprotein</molecule>
    <text>Produced by +1 ribosomal frameshifting between codon Leu-435 and Gly-436 of the YPR137C-A ORF.</text>
</comment>
<proteinExistence type="inferred from homology"/>
<keyword id="KW-0064">Aspartyl protease</keyword>
<keyword id="KW-0067">ATP-binding</keyword>
<keyword id="KW-0963">Cytoplasm</keyword>
<keyword id="KW-0229">DNA integration</keyword>
<keyword id="KW-0233">DNA recombination</keyword>
<keyword id="KW-0238">DNA-binding</keyword>
<keyword id="KW-0239">DNA-directed DNA polymerase</keyword>
<keyword id="KW-0255">Endonuclease</keyword>
<keyword id="KW-0378">Hydrolase</keyword>
<keyword id="KW-0460">Magnesium</keyword>
<keyword id="KW-0479">Metal-binding</keyword>
<keyword id="KW-0511">Multifunctional enzyme</keyword>
<keyword id="KW-0540">Nuclease</keyword>
<keyword id="KW-0547">Nucleotide-binding</keyword>
<keyword id="KW-0548">Nucleotidyltransferase</keyword>
<keyword id="KW-0539">Nucleus</keyword>
<keyword id="KW-0597">Phosphoprotein</keyword>
<keyword id="KW-0645">Protease</keyword>
<keyword id="KW-1185">Reference proteome</keyword>
<keyword id="KW-0688">Ribosomal frameshifting</keyword>
<keyword id="KW-0694">RNA-binding</keyword>
<keyword id="KW-0695">RNA-directed DNA polymerase</keyword>
<keyword id="KW-0808">Transferase</keyword>
<keyword id="KW-0814">Transposable element</keyword>
<keyword id="KW-0815">Transposition</keyword>
<keyword id="KW-1188">Viral release from host cell</keyword>
<keyword id="KW-0917">Virion maturation</keyword>
<keyword id="KW-0862">Zinc</keyword>
<keyword id="KW-0863">Zinc-finger</keyword>
<name>YP12B_YEAST</name>
<sequence length="1755" mass="198568">MESQQLSQHSPISHGSACASVTSKEVHTNQDPLDVSASKTEECEKASTKANSQQTTTPASSAVPENPHHASPQTAQSHSPQNGPYPQQCMMTQNQANPSGWSFYGHPSMIPYTPYQMSPMYFPPGPQSQFPQYPSSVGTPLSTPSPESGNTFTDSSSADSDMTSTKKYVRPPPMLTSPNDFPNWVKTYIKFLQNSNLGGIIPTVNGKPVRQITDDELTFLYNTFQIFAPSQFLPTWVKDILSVDYTDIMKILSKSIEKMQSDTQEANDIVTLANLQYNGSTPADAFETKVTNIIDRLNNNGIHINNKVACQLIMRGLSGEYKFLRYTRHRHLNMTVAELFLDIHAIYEEQQGSRNSKPNYRRNPSDEKNDSRSYTNTTKPKVIARNPQKTNNSKSKTARAHNVSTSNNSPSTDNDSISKSTTEPIQLNNKHDLHLGQKLTESTVNHTNHSDDELPGHLLLDSGASRTLIRSAHHIHSASSNPDINVVDAQKRNIPINAIGDLQFHFQDNTKTSIKVLHTPNIAYDLLSLNELAAVDITACFTKNVLERSDGTVLAPIVKYGDFYWVSKKYLLPSNISVPTINNVHTSESTRKYPYPFIHRMLAHANAQTIRYSLKNNTITYFNESDVDWSSAIDYQCPDCLIGKSTKHRHIKGSRLKYQNSYEPFQYLHTDIFGPVHNLPKSAPSYFISFTDETTKFRWVYPLHDRREDSILDVFTTILAFIKNQFQASVLVIQMDRGSEYTNRTLHKFLEKNGITPCYTTTADSRAHGVAERLNRTLLDDCRTQLQCSGLPNHLWFSAIEFSTIVRNSLASPKSKKSARQHAGLAGLDISTLLPFGQPVIVNDHNPNSKIHPRGIPGYALHPSRNSYGYIIYLPSLKKTVDTTNYVILQGKESRLDQFNYDALTFDEDLNRLTASYHSFIASNEIQESNDLNIESDHDFQSDIELHPEQPRNVLSKAVSPTDSTPPSTHTEDSKRVSKTNIRAPREVDPNISESNILPSKKRSSTPQISNIESTGSGGMHKLNVPLLAPMSQSNTHESSHASKSKDFRHSDSYSENETNHTNVPISSTGGTNNKTVPQISDQETEKRIIHRSPSIDASPPENNSSHNIVPIKTPTTVSEQNTEESIIADLPLPDLPPESPTEFPDPFKELPPINSHQTNSSLGGIGDSNAYTTINSKKRSLEDNETEIKVSRDTWNTKNMRSLEPPRSKKRIHLIAAVKAVKSIKPIRTTLRYDEAITYNKDIKEKEKYIEAYHKEVNQLLKMNTWDTDKYYDRKEIDPKRVINSMFIFNKKRDGTHKARFVARGDIQHPDTYDTGMQSNTVHHYALMTSLSLALDNNYYITQLDISSAYLYADIKEELYIRPPPHLGMNDKLIRLKKSHYGLKQSGANWYETIKSYLIKQCGMEEVRGWSCVFKNSQVTICLFVDDMILFSKDLNANKKIITTLKKQYDTKIINLGESDNEIQYDILGLEIKYQRGKYMKLGMENSLTEKIPKLNVPLNPKGRKLSAPGQPGLYIDQDELEIDEDEYKEKVHEMQKLIGLASYVGYKFRFDLLYYINTLAQHILFPSRQVLDMTYELIQFMWDTRDKQLIWHKNKPTEPDNKLVAISDASYGNQPYYKSQIGNIFLLNGKVIGGKSTKASLTCTSTTEAEIHAVSEAIPLLNNLSHLVQELNKKPIIKGLLTDSRSTISIIKSTNEEKFRNRFFGTKAMRLRDEVSGNNLYVYYIETKKNIADVMTKPLPIKTFKLLTNKWIH</sequence>
<organism>
    <name type="scientific">Saccharomyces cerevisiae (strain ATCC 204508 / S288c)</name>
    <name type="common">Baker's yeast</name>
    <dbReference type="NCBI Taxonomy" id="559292"/>
    <lineage>
        <taxon>Eukaryota</taxon>
        <taxon>Fungi</taxon>
        <taxon>Dikarya</taxon>
        <taxon>Ascomycota</taxon>
        <taxon>Saccharomycotina</taxon>
        <taxon>Saccharomycetes</taxon>
        <taxon>Saccharomycetales</taxon>
        <taxon>Saccharomycetaceae</taxon>
        <taxon>Saccharomyces</taxon>
    </lineage>
</organism>
<gene>
    <name type="primary">TY1B-PR1</name>
    <name type="synonym">YPRCTy1-2 POL</name>
    <name type="ordered locus">YPR137C-B</name>
    <name type="ORF">P9659.6c</name>
</gene>
<evidence type="ECO:0000250" key="1"/>
<evidence type="ECO:0000250" key="2">
    <source>
        <dbReference type="UniProtKB" id="Q99231"/>
    </source>
</evidence>
<evidence type="ECO:0000255" key="3">
    <source>
        <dbReference type="PROSITE-ProRule" id="PRU00457"/>
    </source>
</evidence>
<evidence type="ECO:0000255" key="4">
    <source>
        <dbReference type="PROSITE-ProRule" id="PRU10094"/>
    </source>
</evidence>
<evidence type="ECO:0000256" key="5">
    <source>
        <dbReference type="SAM" id="MobiDB-lite"/>
    </source>
</evidence>
<accession>P0C2I9</accession>
<accession>D6W4D4</accession>
<reference key="1">
    <citation type="journal article" date="1997" name="Nature">
        <title>The nucleotide sequence of Saccharomyces cerevisiae chromosome XVI.</title>
        <authorList>
            <person name="Bussey H."/>
            <person name="Storms R.K."/>
            <person name="Ahmed A."/>
            <person name="Albermann K."/>
            <person name="Allen E."/>
            <person name="Ansorge W."/>
            <person name="Araujo R."/>
            <person name="Aparicio A."/>
            <person name="Barrell B.G."/>
            <person name="Badcock K."/>
            <person name="Benes V."/>
            <person name="Botstein D."/>
            <person name="Bowman S."/>
            <person name="Brueckner M."/>
            <person name="Carpenter J."/>
            <person name="Cherry J.M."/>
            <person name="Chung E."/>
            <person name="Churcher C.M."/>
            <person name="Coster F."/>
            <person name="Davis K."/>
            <person name="Davis R.W."/>
            <person name="Dietrich F.S."/>
            <person name="Delius H."/>
            <person name="DiPaolo T."/>
            <person name="Dubois E."/>
            <person name="Duesterhoeft A."/>
            <person name="Duncan M."/>
            <person name="Floeth M."/>
            <person name="Fortin N."/>
            <person name="Friesen J.D."/>
            <person name="Fritz C."/>
            <person name="Goffeau A."/>
            <person name="Hall J."/>
            <person name="Hebling U."/>
            <person name="Heumann K."/>
            <person name="Hilbert H."/>
            <person name="Hillier L.W."/>
            <person name="Hunicke-Smith S."/>
            <person name="Hyman R.W."/>
            <person name="Johnston M."/>
            <person name="Kalman S."/>
            <person name="Kleine K."/>
            <person name="Komp C."/>
            <person name="Kurdi O."/>
            <person name="Lashkari D."/>
            <person name="Lew H."/>
            <person name="Lin A."/>
            <person name="Lin D."/>
            <person name="Louis E.J."/>
            <person name="Marathe R."/>
            <person name="Messenguy F."/>
            <person name="Mewes H.-W."/>
            <person name="Mirtipati S."/>
            <person name="Moestl D."/>
            <person name="Mueller-Auer S."/>
            <person name="Namath A."/>
            <person name="Nentwich U."/>
            <person name="Oefner P."/>
            <person name="Pearson D."/>
            <person name="Petel F.X."/>
            <person name="Pohl T.M."/>
            <person name="Purnelle B."/>
            <person name="Rajandream M.A."/>
            <person name="Rechmann S."/>
            <person name="Rieger M."/>
            <person name="Riles L."/>
            <person name="Roberts D."/>
            <person name="Schaefer M."/>
            <person name="Scharfe M."/>
            <person name="Scherens B."/>
            <person name="Schramm S."/>
            <person name="Schroeder M."/>
            <person name="Sdicu A.-M."/>
            <person name="Tettelin H."/>
            <person name="Urrestarazu L.A."/>
            <person name="Ushinsky S."/>
            <person name="Vierendeels F."/>
            <person name="Vissers S."/>
            <person name="Voss H."/>
            <person name="Walsh S.V."/>
            <person name="Wambutt R."/>
            <person name="Wang Y."/>
            <person name="Wedler E."/>
            <person name="Wedler H."/>
            <person name="Winnett E."/>
            <person name="Zhong W.-W."/>
            <person name="Zollner A."/>
            <person name="Vo D.H."/>
            <person name="Hani J."/>
        </authorList>
    </citation>
    <scope>NUCLEOTIDE SEQUENCE [LARGE SCALE GENOMIC DNA]</scope>
    <source>
        <strain>ATCC 204508 / S288c</strain>
    </source>
</reference>
<reference key="2">
    <citation type="journal article" date="2014" name="G3 (Bethesda)">
        <title>The reference genome sequence of Saccharomyces cerevisiae: Then and now.</title>
        <authorList>
            <person name="Engel S.R."/>
            <person name="Dietrich F.S."/>
            <person name="Fisk D.G."/>
            <person name="Binkley G."/>
            <person name="Balakrishnan R."/>
            <person name="Costanzo M.C."/>
            <person name="Dwight S.S."/>
            <person name="Hitz B.C."/>
            <person name="Karra K."/>
            <person name="Nash R.S."/>
            <person name="Weng S."/>
            <person name="Wong E.D."/>
            <person name="Lloyd P."/>
            <person name="Skrzypek M.S."/>
            <person name="Miyasato S.R."/>
            <person name="Simison M."/>
            <person name="Cherry J.M."/>
        </authorList>
    </citation>
    <scope>GENOME REANNOTATION</scope>
    <source>
        <strain>ATCC 204508 / S288c</strain>
    </source>
</reference>
<reference key="3">
    <citation type="journal article" date="1998" name="Genome Res.">
        <title>Transposable elements and genome organization: a comprehensive survey of retrotransposons revealed by the complete Saccharomyces cerevisiae genome sequence.</title>
        <authorList>
            <person name="Kim J.M."/>
            <person name="Vanguri S."/>
            <person name="Boeke J.D."/>
            <person name="Gabriel A."/>
            <person name="Voytas D.F."/>
        </authorList>
    </citation>
    <scope>NOMENCLATURE</scope>
</reference>
<reference key="4">
    <citation type="journal article" date="2005" name="Cytogenet. Genome Res.">
        <title>Happy together: the life and times of Ty retrotransposons and their hosts.</title>
        <authorList>
            <person name="Lesage P."/>
            <person name="Todeschini A.L."/>
        </authorList>
    </citation>
    <scope>REVIEW</scope>
</reference>
<reference key="5">
    <citation type="journal article" date="2005" name="Cytogenet. Genome Res.">
        <title>Reverse transcriptase and integrase of the Saccharomyces cerevisiae Ty1 element.</title>
        <authorList>
            <person name="Wilhelm F.-X."/>
            <person name="Wilhelm M."/>
            <person name="Gabriel A."/>
        </authorList>
    </citation>
    <scope>REVIEW</scope>
    <scope>DOMAINS</scope>
</reference>
<protein>
    <recommendedName>
        <fullName>Transposon Ty1-PR1 Gag-Pol polyprotein</fullName>
    </recommendedName>
    <alternativeName>
        <fullName>Gag-Pol-p199</fullName>
    </alternativeName>
    <alternativeName>
        <fullName>TY1A-TY1B</fullName>
    </alternativeName>
    <alternativeName>
        <fullName>Transposon Ty1 TYA-TYB polyprotein</fullName>
    </alternativeName>
    <alternativeName>
        <fullName>p190</fullName>
    </alternativeName>
    <component>
        <recommendedName>
            <fullName>Capsid protein</fullName>
            <shortName>CA</shortName>
        </recommendedName>
        <alternativeName>
            <fullName>Gag-p45</fullName>
        </alternativeName>
        <alternativeName>
            <fullName>p54</fullName>
        </alternativeName>
    </component>
    <component>
        <recommendedName>
            <fullName>Ty1 protease</fullName>
            <shortName>PR</shortName>
            <ecNumber>3.4.23.-</ecNumber>
        </recommendedName>
        <alternativeName>
            <fullName>Pol-p20</fullName>
        </alternativeName>
        <alternativeName>
            <fullName>p23</fullName>
        </alternativeName>
    </component>
    <component>
        <recommendedName>
            <fullName>Integrase</fullName>
            <shortName>IN</shortName>
        </recommendedName>
        <alternativeName>
            <fullName>Pol-p71</fullName>
        </alternativeName>
        <alternativeName>
            <fullName>p84</fullName>
        </alternativeName>
        <alternativeName>
            <fullName>p90</fullName>
        </alternativeName>
    </component>
    <component>
        <recommendedName>
            <fullName>Reverse transcriptase/ribonuclease H</fullName>
            <shortName>RT</shortName>
            <shortName>RT-RH</shortName>
            <ecNumber>2.7.7.49</ecNumber>
            <ecNumber>2.7.7.7</ecNumber>
            <ecNumber>3.1.26.4</ecNumber>
        </recommendedName>
        <alternativeName>
            <fullName>Pol-p63</fullName>
        </alternativeName>
        <alternativeName>
            <fullName>p60</fullName>
        </alternativeName>
    </component>
</protein>
<feature type="chain" id="PRO_0000279174" description="Transposon Ty1-PR1 Gag-Pol polyprotein">
    <location>
        <begin position="1"/>
        <end position="1755"/>
    </location>
</feature>
<feature type="chain" id="PRO_0000279175" description="Capsid protein" evidence="1">
    <location>
        <begin position="1"/>
        <end position="401"/>
    </location>
</feature>
<feature type="chain" id="PRO_0000279176" description="Ty1 protease" evidence="1">
    <location>
        <begin position="402"/>
        <end position="582"/>
    </location>
</feature>
<feature type="chain" id="PRO_0000279177" description="Integrase" evidence="1">
    <location>
        <begin position="583"/>
        <end position="1217"/>
    </location>
</feature>
<feature type="chain" id="PRO_0000279178" description="Reverse transcriptase/ribonuclease H" evidence="1">
    <location>
        <begin position="1218"/>
        <end position="1755"/>
    </location>
</feature>
<feature type="domain" description="Integrase catalytic" evidence="3">
    <location>
        <begin position="660"/>
        <end position="835"/>
    </location>
</feature>
<feature type="domain" description="Reverse transcriptase Ty1/copia-type">
    <location>
        <begin position="1338"/>
        <end position="1476"/>
    </location>
</feature>
<feature type="domain" description="RNase H Ty1/copia-type">
    <location>
        <begin position="1610"/>
        <end position="1752"/>
    </location>
</feature>
<feature type="region of interest" description="Disordered" evidence="5">
    <location>
        <begin position="1"/>
        <end position="93"/>
    </location>
</feature>
<feature type="region of interest" description="Disordered" evidence="5">
    <location>
        <begin position="126"/>
        <end position="173"/>
    </location>
</feature>
<feature type="region of interest" description="RNA-binding" evidence="1">
    <location>
        <begin position="299"/>
        <end position="401"/>
    </location>
</feature>
<feature type="region of interest" description="Disordered" evidence="5">
    <location>
        <begin position="352"/>
        <end position="421"/>
    </location>
</feature>
<feature type="region of interest" description="Integrase-type zinc finger-like">
    <location>
        <begin position="583"/>
        <end position="640"/>
    </location>
</feature>
<feature type="region of interest" description="Disordered" evidence="5">
    <location>
        <begin position="956"/>
        <end position="1087"/>
    </location>
</feature>
<feature type="region of interest" description="Disordered" evidence="5">
    <location>
        <begin position="1092"/>
        <end position="1111"/>
    </location>
</feature>
<feature type="region of interest" description="Disordered" evidence="5">
    <location>
        <begin position="1130"/>
        <end position="1187"/>
    </location>
</feature>
<feature type="short sequence motif" description="Bipartite nuclear localization signal" evidence="1">
    <location>
        <begin position="1178"/>
        <end position="1212"/>
    </location>
</feature>
<feature type="compositionally biased region" description="Polar residues" evidence="5">
    <location>
        <begin position="1"/>
        <end position="23"/>
    </location>
</feature>
<feature type="compositionally biased region" description="Polar residues" evidence="5">
    <location>
        <begin position="48"/>
        <end position="60"/>
    </location>
</feature>
<feature type="compositionally biased region" description="Polar residues" evidence="5">
    <location>
        <begin position="71"/>
        <end position="93"/>
    </location>
</feature>
<feature type="compositionally biased region" description="Polar residues" evidence="5">
    <location>
        <begin position="127"/>
        <end position="152"/>
    </location>
</feature>
<feature type="compositionally biased region" description="Low complexity" evidence="5">
    <location>
        <begin position="153"/>
        <end position="165"/>
    </location>
</feature>
<feature type="compositionally biased region" description="Low complexity" evidence="5">
    <location>
        <begin position="402"/>
        <end position="418"/>
    </location>
</feature>
<feature type="compositionally biased region" description="Low complexity" evidence="5">
    <location>
        <begin position="960"/>
        <end position="969"/>
    </location>
</feature>
<feature type="compositionally biased region" description="Polar residues" evidence="5">
    <location>
        <begin position="1005"/>
        <end position="1015"/>
    </location>
</feature>
<feature type="compositionally biased region" description="Basic and acidic residues" evidence="5">
    <location>
        <begin position="1038"/>
        <end position="1053"/>
    </location>
</feature>
<feature type="compositionally biased region" description="Polar residues" evidence="5">
    <location>
        <begin position="1054"/>
        <end position="1082"/>
    </location>
</feature>
<feature type="compositionally biased region" description="Polar residues" evidence="5">
    <location>
        <begin position="1101"/>
        <end position="1111"/>
    </location>
</feature>
<feature type="active site" description="For protease activity; shared with dimeric partner" evidence="4">
    <location>
        <position position="461"/>
    </location>
</feature>
<feature type="binding site" evidence="3">
    <location>
        <position position="671"/>
    </location>
    <ligand>
        <name>Mg(2+)</name>
        <dbReference type="ChEBI" id="CHEBI:18420"/>
        <label>1</label>
        <note>catalytic; for integrase activity</note>
    </ligand>
</feature>
<feature type="binding site" evidence="3">
    <location>
        <position position="736"/>
    </location>
    <ligand>
        <name>Mg(2+)</name>
        <dbReference type="ChEBI" id="CHEBI:18420"/>
        <label>1</label>
        <note>catalytic; for integrase activity</note>
    </ligand>
</feature>
<feature type="binding site" evidence="3">
    <location>
        <position position="1346"/>
    </location>
    <ligand>
        <name>Mg(2+)</name>
        <dbReference type="ChEBI" id="CHEBI:18420"/>
        <label>2</label>
        <note>catalytic; for reverse transcriptase activity</note>
    </ligand>
</feature>
<feature type="binding site" evidence="3">
    <location>
        <position position="1427"/>
    </location>
    <ligand>
        <name>Mg(2+)</name>
        <dbReference type="ChEBI" id="CHEBI:18420"/>
        <label>2</label>
        <note>catalytic; for reverse transcriptase activity</note>
    </ligand>
</feature>
<feature type="binding site" evidence="3">
    <location>
        <position position="1428"/>
    </location>
    <ligand>
        <name>Mg(2+)</name>
        <dbReference type="ChEBI" id="CHEBI:18420"/>
        <label>2</label>
        <note>catalytic; for reverse transcriptase activity</note>
    </ligand>
</feature>
<feature type="binding site" evidence="3">
    <location>
        <position position="1610"/>
    </location>
    <ligand>
        <name>Mg(2+)</name>
        <dbReference type="ChEBI" id="CHEBI:18420"/>
        <label>3</label>
        <note>catalytic; for RNase H activity</note>
    </ligand>
</feature>
<feature type="binding site" evidence="3">
    <location>
        <position position="1652"/>
    </location>
    <ligand>
        <name>Mg(2+)</name>
        <dbReference type="ChEBI" id="CHEBI:18420"/>
        <label>3</label>
        <note>catalytic; for RNase H activity</note>
    </ligand>
</feature>
<feature type="binding site" evidence="3">
    <location>
        <position position="1685"/>
    </location>
    <ligand>
        <name>Mg(2+)</name>
        <dbReference type="ChEBI" id="CHEBI:18420"/>
        <label>3</label>
        <note>catalytic; for RNase H activity</note>
    </ligand>
</feature>
<feature type="site" description="Cleavage; by Ty1 protease" evidence="1">
    <location>
        <begin position="401"/>
        <end position="402"/>
    </location>
</feature>
<feature type="site" description="Cleavage; by Ty1 protease" evidence="1">
    <location>
        <begin position="582"/>
        <end position="583"/>
    </location>
</feature>
<feature type="site" description="Cleavage; by Ty1 protease" evidence="1">
    <location>
        <begin position="1217"/>
        <end position="1218"/>
    </location>
</feature>
<feature type="modified residue" description="Phosphoserine" evidence="2">
    <location>
        <position position="416"/>
    </location>
</feature>
<dbReference type="EC" id="3.4.23.-"/>
<dbReference type="EC" id="2.7.7.49"/>
<dbReference type="EC" id="2.7.7.7"/>
<dbReference type="EC" id="3.1.26.4"/>
<dbReference type="EMBL" id="U40829">
    <property type="status" value="NOT_ANNOTATED_CDS"/>
    <property type="molecule type" value="Genomic_DNA"/>
</dbReference>
<dbReference type="EMBL" id="BK006949">
    <property type="protein sequence ID" value="DAA11550.1"/>
    <property type="molecule type" value="Genomic_DNA"/>
</dbReference>
<dbReference type="PIR" id="S69980">
    <property type="entry name" value="S69980"/>
</dbReference>
<dbReference type="RefSeq" id="NP_058191.1">
    <molecule id="P0C2I9-1"/>
    <property type="nucleotide sequence ID" value="NM_001184394.2"/>
</dbReference>
<dbReference type="SMR" id="P0C2I9"/>
<dbReference type="BioGRID" id="36304">
    <property type="interactions" value="13"/>
</dbReference>
<dbReference type="FunCoup" id="P0C2I9">
    <property type="interactions" value="52"/>
</dbReference>
<dbReference type="IntAct" id="P0C2I9">
    <property type="interactions" value="1"/>
</dbReference>
<dbReference type="GlyGen" id="P0C2I9">
    <property type="glycosylation" value="3 sites"/>
</dbReference>
<dbReference type="PaxDb" id="4932-YPR137C-B"/>
<dbReference type="PeptideAtlas" id="P0C2I9"/>
<dbReference type="GeneID" id="856257"/>
<dbReference type="KEGG" id="sce:YPR137C-B"/>
<dbReference type="AGR" id="SGD:S000007360"/>
<dbReference type="SGD" id="S000007360">
    <property type="gene designation" value="YPR137C-B"/>
</dbReference>
<dbReference type="VEuPathDB" id="FungiDB:YPR137C-B"/>
<dbReference type="eggNOG" id="KOG0017">
    <property type="taxonomic scope" value="Eukaryota"/>
</dbReference>
<dbReference type="HOGENOM" id="CLU_244151_0_0_1"/>
<dbReference type="InParanoid" id="P0C2I9"/>
<dbReference type="OrthoDB" id="5423336at2759"/>
<dbReference type="Proteomes" id="UP000002311">
    <property type="component" value="Chromosome XVI"/>
</dbReference>
<dbReference type="RNAct" id="P0C2I9">
    <property type="molecule type" value="protein"/>
</dbReference>
<dbReference type="GO" id="GO:0005737">
    <property type="term" value="C:cytoplasm"/>
    <property type="evidence" value="ECO:0007669"/>
    <property type="project" value="UniProtKB-SubCell"/>
</dbReference>
<dbReference type="GO" id="GO:0005634">
    <property type="term" value="C:nucleus"/>
    <property type="evidence" value="ECO:0000314"/>
    <property type="project" value="SGD"/>
</dbReference>
<dbReference type="GO" id="GO:0004190">
    <property type="term" value="F:aspartic-type endopeptidase activity"/>
    <property type="evidence" value="ECO:0007669"/>
    <property type="project" value="UniProtKB-KW"/>
</dbReference>
<dbReference type="GO" id="GO:0005524">
    <property type="term" value="F:ATP binding"/>
    <property type="evidence" value="ECO:0007669"/>
    <property type="project" value="UniProtKB-KW"/>
</dbReference>
<dbReference type="GO" id="GO:0003677">
    <property type="term" value="F:DNA binding"/>
    <property type="evidence" value="ECO:0007669"/>
    <property type="project" value="UniProtKB-KW"/>
</dbReference>
<dbReference type="GO" id="GO:0003887">
    <property type="term" value="F:DNA-directed DNA polymerase activity"/>
    <property type="evidence" value="ECO:0007669"/>
    <property type="project" value="UniProtKB-KW"/>
</dbReference>
<dbReference type="GO" id="GO:0003723">
    <property type="term" value="F:RNA binding"/>
    <property type="evidence" value="ECO:0007669"/>
    <property type="project" value="UniProtKB-KW"/>
</dbReference>
<dbReference type="GO" id="GO:0003964">
    <property type="term" value="F:RNA-directed DNA polymerase activity"/>
    <property type="evidence" value="ECO:0007669"/>
    <property type="project" value="UniProtKB-KW"/>
</dbReference>
<dbReference type="GO" id="GO:0004523">
    <property type="term" value="F:RNA-DNA hybrid ribonuclease activity"/>
    <property type="evidence" value="ECO:0007669"/>
    <property type="project" value="UniProtKB-EC"/>
</dbReference>
<dbReference type="GO" id="GO:0008270">
    <property type="term" value="F:zinc ion binding"/>
    <property type="evidence" value="ECO:0007669"/>
    <property type="project" value="UniProtKB-KW"/>
</dbReference>
<dbReference type="GO" id="GO:0015074">
    <property type="term" value="P:DNA integration"/>
    <property type="evidence" value="ECO:0007669"/>
    <property type="project" value="UniProtKB-KW"/>
</dbReference>
<dbReference type="GO" id="GO:0006310">
    <property type="term" value="P:DNA recombination"/>
    <property type="evidence" value="ECO:0007669"/>
    <property type="project" value="UniProtKB-KW"/>
</dbReference>
<dbReference type="GO" id="GO:0006508">
    <property type="term" value="P:proteolysis"/>
    <property type="evidence" value="ECO:0007669"/>
    <property type="project" value="UniProtKB-KW"/>
</dbReference>
<dbReference type="GO" id="GO:0032196">
    <property type="term" value="P:transposition"/>
    <property type="evidence" value="ECO:0007669"/>
    <property type="project" value="UniProtKB-KW"/>
</dbReference>
<dbReference type="GO" id="GO:0075523">
    <property type="term" value="P:viral translational frameshifting"/>
    <property type="evidence" value="ECO:0007669"/>
    <property type="project" value="UniProtKB-KW"/>
</dbReference>
<dbReference type="CDD" id="cd09272">
    <property type="entry name" value="RNase_HI_RT_Ty1"/>
    <property type="match status" value="1"/>
</dbReference>
<dbReference type="FunFam" id="3.30.420.10:FF:000050">
    <property type="entry name" value="Transposon Ty2-DR3 Gag-Pol polyprotein"/>
    <property type="match status" value="1"/>
</dbReference>
<dbReference type="Gene3D" id="3.30.420.10">
    <property type="entry name" value="Ribonuclease H-like superfamily/Ribonuclease H"/>
    <property type="match status" value="1"/>
</dbReference>
<dbReference type="InterPro" id="IPR001969">
    <property type="entry name" value="Aspartic_peptidase_AS"/>
</dbReference>
<dbReference type="InterPro" id="IPR043502">
    <property type="entry name" value="DNA/RNA_pol_sf"/>
</dbReference>
<dbReference type="InterPro" id="IPR001584">
    <property type="entry name" value="Integrase_cat-core"/>
</dbReference>
<dbReference type="InterPro" id="IPR039537">
    <property type="entry name" value="Retrotran_Ty1/copia-like"/>
</dbReference>
<dbReference type="InterPro" id="IPR012337">
    <property type="entry name" value="RNaseH-like_sf"/>
</dbReference>
<dbReference type="InterPro" id="IPR036397">
    <property type="entry name" value="RNaseH_sf"/>
</dbReference>
<dbReference type="InterPro" id="IPR013103">
    <property type="entry name" value="RVT_2"/>
</dbReference>
<dbReference type="InterPro" id="IPR015820">
    <property type="entry name" value="TYA"/>
</dbReference>
<dbReference type="PANTHER" id="PTHR42648">
    <property type="entry name" value="TRANSPOSASE, PUTATIVE-RELATED"/>
    <property type="match status" value="1"/>
</dbReference>
<dbReference type="PANTHER" id="PTHR42648:SF11">
    <property type="entry name" value="TRANSPOSON TY4-P GAG-POL POLYPROTEIN"/>
    <property type="match status" value="1"/>
</dbReference>
<dbReference type="Pfam" id="PF00665">
    <property type="entry name" value="rve"/>
    <property type="match status" value="1"/>
</dbReference>
<dbReference type="Pfam" id="PF07727">
    <property type="entry name" value="RVT_2"/>
    <property type="match status" value="1"/>
</dbReference>
<dbReference type="Pfam" id="PF01021">
    <property type="entry name" value="TYA"/>
    <property type="match status" value="1"/>
</dbReference>
<dbReference type="SUPFAM" id="SSF56672">
    <property type="entry name" value="DNA/RNA polymerases"/>
    <property type="match status" value="1"/>
</dbReference>
<dbReference type="SUPFAM" id="SSF53098">
    <property type="entry name" value="Ribonuclease H-like"/>
    <property type="match status" value="1"/>
</dbReference>
<dbReference type="PROSITE" id="PS00141">
    <property type="entry name" value="ASP_PROTEASE"/>
    <property type="match status" value="1"/>
</dbReference>
<dbReference type="PROSITE" id="PS50994">
    <property type="entry name" value="INTEGRASE"/>
    <property type="match status" value="1"/>
</dbReference>